<comment type="function">
    <text evidence="1">Catalyzes the condensation reaction of fatty acid synthesis by the addition to an acyl acceptor of two carbons from malonyl-ACP. Catalyzes the first condensation reaction which initiates fatty acid synthesis and may therefore play a role in governing the total rate of fatty acid production. Possesses both acetoacetyl-ACP synthase and acetyl transacylase activities. Its substrate specificity determines the biosynthesis of branched-chain and/or straight-chain of fatty acids.</text>
</comment>
<comment type="catalytic activity">
    <reaction evidence="1">
        <text>malonyl-[ACP] + acetyl-CoA + H(+) = 3-oxobutanoyl-[ACP] + CO2 + CoA</text>
        <dbReference type="Rhea" id="RHEA:12080"/>
        <dbReference type="Rhea" id="RHEA-COMP:9623"/>
        <dbReference type="Rhea" id="RHEA-COMP:9625"/>
        <dbReference type="ChEBI" id="CHEBI:15378"/>
        <dbReference type="ChEBI" id="CHEBI:16526"/>
        <dbReference type="ChEBI" id="CHEBI:57287"/>
        <dbReference type="ChEBI" id="CHEBI:57288"/>
        <dbReference type="ChEBI" id="CHEBI:78449"/>
        <dbReference type="ChEBI" id="CHEBI:78450"/>
        <dbReference type="EC" id="2.3.1.180"/>
    </reaction>
</comment>
<comment type="pathway">
    <text evidence="1">Lipid metabolism; fatty acid biosynthesis.</text>
</comment>
<comment type="subunit">
    <text evidence="1">Homodimer.</text>
</comment>
<comment type="subcellular location">
    <subcellularLocation>
        <location evidence="1">Cytoplasm</location>
    </subcellularLocation>
</comment>
<comment type="domain">
    <text evidence="1">The last Arg residue of the ACP-binding site is essential for the weak association between ACP/AcpP and FabH.</text>
</comment>
<comment type="similarity">
    <text evidence="1">Belongs to the thiolase-like superfamily. FabH family.</text>
</comment>
<organism>
    <name type="scientific">Shigella dysenteriae serotype 1 (strain Sd197)</name>
    <dbReference type="NCBI Taxonomy" id="300267"/>
    <lineage>
        <taxon>Bacteria</taxon>
        <taxon>Pseudomonadati</taxon>
        <taxon>Pseudomonadota</taxon>
        <taxon>Gammaproteobacteria</taxon>
        <taxon>Enterobacterales</taxon>
        <taxon>Enterobacteriaceae</taxon>
        <taxon>Shigella</taxon>
    </lineage>
</organism>
<dbReference type="EC" id="2.3.1.180" evidence="1"/>
<dbReference type="EMBL" id="CP000034">
    <property type="protein sequence ID" value="ABB62154.1"/>
    <property type="molecule type" value="Genomic_DNA"/>
</dbReference>
<dbReference type="RefSeq" id="WP_000288133.1">
    <property type="nucleotide sequence ID" value="NC_007606.1"/>
</dbReference>
<dbReference type="RefSeq" id="YP_403645.1">
    <property type="nucleotide sequence ID" value="NC_007606.1"/>
</dbReference>
<dbReference type="SMR" id="Q32EV1"/>
<dbReference type="STRING" id="300267.SDY_2059"/>
<dbReference type="EnsemblBacteria" id="ABB62154">
    <property type="protein sequence ID" value="ABB62154"/>
    <property type="gene ID" value="SDY_2059"/>
</dbReference>
<dbReference type="KEGG" id="sdy:SDY_2059"/>
<dbReference type="PATRIC" id="fig|300267.13.peg.2474"/>
<dbReference type="HOGENOM" id="CLU_039592_3_1_6"/>
<dbReference type="UniPathway" id="UPA00094"/>
<dbReference type="Proteomes" id="UP000002716">
    <property type="component" value="Chromosome"/>
</dbReference>
<dbReference type="GO" id="GO:0005737">
    <property type="term" value="C:cytoplasm"/>
    <property type="evidence" value="ECO:0007669"/>
    <property type="project" value="UniProtKB-SubCell"/>
</dbReference>
<dbReference type="GO" id="GO:0004315">
    <property type="term" value="F:3-oxoacyl-[acyl-carrier-protein] synthase activity"/>
    <property type="evidence" value="ECO:0007669"/>
    <property type="project" value="InterPro"/>
</dbReference>
<dbReference type="GO" id="GO:0033818">
    <property type="term" value="F:beta-ketoacyl-acyl-carrier-protein synthase III activity"/>
    <property type="evidence" value="ECO:0007669"/>
    <property type="project" value="UniProtKB-UniRule"/>
</dbReference>
<dbReference type="GO" id="GO:0006633">
    <property type="term" value="P:fatty acid biosynthetic process"/>
    <property type="evidence" value="ECO:0007669"/>
    <property type="project" value="UniProtKB-UniRule"/>
</dbReference>
<dbReference type="CDD" id="cd00830">
    <property type="entry name" value="KAS_III"/>
    <property type="match status" value="1"/>
</dbReference>
<dbReference type="FunFam" id="3.40.47.10:FF:000004">
    <property type="entry name" value="3-oxoacyl-[acyl-carrier-protein] synthase 3"/>
    <property type="match status" value="1"/>
</dbReference>
<dbReference type="Gene3D" id="3.40.47.10">
    <property type="match status" value="1"/>
</dbReference>
<dbReference type="HAMAP" id="MF_01815">
    <property type="entry name" value="FabH"/>
    <property type="match status" value="1"/>
</dbReference>
<dbReference type="InterPro" id="IPR013747">
    <property type="entry name" value="ACP_syn_III_C"/>
</dbReference>
<dbReference type="InterPro" id="IPR013751">
    <property type="entry name" value="ACP_syn_III_N"/>
</dbReference>
<dbReference type="InterPro" id="IPR004655">
    <property type="entry name" value="FabH"/>
</dbReference>
<dbReference type="InterPro" id="IPR016039">
    <property type="entry name" value="Thiolase-like"/>
</dbReference>
<dbReference type="NCBIfam" id="TIGR00747">
    <property type="entry name" value="fabH"/>
    <property type="match status" value="1"/>
</dbReference>
<dbReference type="NCBIfam" id="NF006829">
    <property type="entry name" value="PRK09352.1"/>
    <property type="match status" value="1"/>
</dbReference>
<dbReference type="PANTHER" id="PTHR43091">
    <property type="entry name" value="3-OXOACYL-[ACYL-CARRIER-PROTEIN] SYNTHASE"/>
    <property type="match status" value="1"/>
</dbReference>
<dbReference type="PANTHER" id="PTHR43091:SF1">
    <property type="entry name" value="BETA-KETOACYL-[ACYL-CARRIER-PROTEIN] SYNTHASE III, CHLOROPLASTIC"/>
    <property type="match status" value="1"/>
</dbReference>
<dbReference type="Pfam" id="PF08545">
    <property type="entry name" value="ACP_syn_III"/>
    <property type="match status" value="1"/>
</dbReference>
<dbReference type="Pfam" id="PF08541">
    <property type="entry name" value="ACP_syn_III_C"/>
    <property type="match status" value="1"/>
</dbReference>
<dbReference type="SUPFAM" id="SSF53901">
    <property type="entry name" value="Thiolase-like"/>
    <property type="match status" value="1"/>
</dbReference>
<name>FABH_SHIDS</name>
<evidence type="ECO:0000255" key="1">
    <source>
        <dbReference type="HAMAP-Rule" id="MF_01815"/>
    </source>
</evidence>
<reference key="1">
    <citation type="journal article" date="2005" name="Nucleic Acids Res.">
        <title>Genome dynamics and diversity of Shigella species, the etiologic agents of bacillary dysentery.</title>
        <authorList>
            <person name="Yang F."/>
            <person name="Yang J."/>
            <person name="Zhang X."/>
            <person name="Chen L."/>
            <person name="Jiang Y."/>
            <person name="Yan Y."/>
            <person name="Tang X."/>
            <person name="Wang J."/>
            <person name="Xiong Z."/>
            <person name="Dong J."/>
            <person name="Xue Y."/>
            <person name="Zhu Y."/>
            <person name="Xu X."/>
            <person name="Sun L."/>
            <person name="Chen S."/>
            <person name="Nie H."/>
            <person name="Peng J."/>
            <person name="Xu J."/>
            <person name="Wang Y."/>
            <person name="Yuan Z."/>
            <person name="Wen Y."/>
            <person name="Yao Z."/>
            <person name="Shen Y."/>
            <person name="Qiang B."/>
            <person name="Hou Y."/>
            <person name="Yu J."/>
            <person name="Jin Q."/>
        </authorList>
    </citation>
    <scope>NUCLEOTIDE SEQUENCE [LARGE SCALE GENOMIC DNA]</scope>
    <source>
        <strain>Sd197</strain>
    </source>
</reference>
<sequence length="317" mass="33543">MYTKIIGTGSYLPEQVRTNADLEKMVDTSDEWIVTRTGIRERHIAAPNETVSTMGFEAATRAIEMAGIEKDQIGLIVVATTSATHAFPSAACQIQSMLGIKGCPAFDVAAACAGFTYALSVADQYVKSGAVKYALVVGSDVLARTCDPTDRGTIIIFGDGAGAAVLAASEEPGIISTHLHADGSYGELLTLPNADRVNPENSIHLTMAGNEVFKVAVTELAHIVDETLAANNLDRSQLDWLVPHQANLRIISATAKKLGMSMDNVVVTLDRHGNTSAASVPCALDEAVRDGRIKPGQLVLLEAFGGGFTWGSVLVRF</sequence>
<gene>
    <name evidence="1" type="primary">fabH</name>
    <name type="ordered locus">SDY_2059</name>
</gene>
<proteinExistence type="inferred from homology"/>
<protein>
    <recommendedName>
        <fullName evidence="1">Beta-ketoacyl-[acyl-carrier-protein] synthase III</fullName>
        <shortName evidence="1">Beta-ketoacyl-ACP synthase III</shortName>
        <shortName evidence="1">KAS III</shortName>
        <ecNumber evidence="1">2.3.1.180</ecNumber>
    </recommendedName>
    <alternativeName>
        <fullName evidence="1">3-oxoacyl-[acyl-carrier-protein] synthase 3</fullName>
    </alternativeName>
    <alternativeName>
        <fullName evidence="1">3-oxoacyl-[acyl-carrier-protein] synthase III</fullName>
    </alternativeName>
</protein>
<keyword id="KW-0012">Acyltransferase</keyword>
<keyword id="KW-0963">Cytoplasm</keyword>
<keyword id="KW-0275">Fatty acid biosynthesis</keyword>
<keyword id="KW-0276">Fatty acid metabolism</keyword>
<keyword id="KW-0444">Lipid biosynthesis</keyword>
<keyword id="KW-0443">Lipid metabolism</keyword>
<keyword id="KW-0511">Multifunctional enzyme</keyword>
<keyword id="KW-1185">Reference proteome</keyword>
<keyword id="KW-0808">Transferase</keyword>
<accession>Q32EV1</accession>
<feature type="chain" id="PRO_1000056407" description="Beta-ketoacyl-[acyl-carrier-protein] synthase III">
    <location>
        <begin position="1"/>
        <end position="317"/>
    </location>
</feature>
<feature type="region of interest" description="ACP-binding" evidence="1">
    <location>
        <begin position="245"/>
        <end position="249"/>
    </location>
</feature>
<feature type="active site" evidence="1">
    <location>
        <position position="112"/>
    </location>
</feature>
<feature type="active site" evidence="1">
    <location>
        <position position="244"/>
    </location>
</feature>
<feature type="active site" evidence="1">
    <location>
        <position position="274"/>
    </location>
</feature>